<comment type="function">
    <text evidence="1">RNA chaperone that binds small regulatory RNA (sRNAs) and mRNAs to facilitate mRNA translational regulation in response to envelope stress, environmental stress and changes in metabolite concentrations. Also binds with high specificity to tRNAs.</text>
</comment>
<comment type="subunit">
    <text evidence="1">Homohexamer.</text>
</comment>
<comment type="similarity">
    <text evidence="1">Belongs to the Hfq family.</text>
</comment>
<gene>
    <name evidence="1" type="primary">hfq</name>
    <name type="ordered locus">RPE_2762</name>
</gene>
<organism>
    <name type="scientific">Rhodopseudomonas palustris (strain BisA53)</name>
    <dbReference type="NCBI Taxonomy" id="316055"/>
    <lineage>
        <taxon>Bacteria</taxon>
        <taxon>Pseudomonadati</taxon>
        <taxon>Pseudomonadota</taxon>
        <taxon>Alphaproteobacteria</taxon>
        <taxon>Hyphomicrobiales</taxon>
        <taxon>Nitrobacteraceae</taxon>
        <taxon>Rhodopseudomonas</taxon>
    </lineage>
</organism>
<sequence>MAADRAQNLQDTFLNHVRKTKTPLTIFLVNGVKLQGIVTWFDNFCLLLRRDGHSQLVYKHAISTIMPGAPIQLFEGGEDAPA</sequence>
<reference key="1">
    <citation type="submission" date="2006-09" db="EMBL/GenBank/DDBJ databases">
        <title>Complete sequence of Rhodopseudomonas palustris BisA53.</title>
        <authorList>
            <consortium name="US DOE Joint Genome Institute"/>
            <person name="Copeland A."/>
            <person name="Lucas S."/>
            <person name="Lapidus A."/>
            <person name="Barry K."/>
            <person name="Detter J.C."/>
            <person name="Glavina del Rio T."/>
            <person name="Hammon N."/>
            <person name="Israni S."/>
            <person name="Dalin E."/>
            <person name="Tice H."/>
            <person name="Pitluck S."/>
            <person name="Chain P."/>
            <person name="Malfatti S."/>
            <person name="Shin M."/>
            <person name="Vergez L."/>
            <person name="Schmutz J."/>
            <person name="Larimer F."/>
            <person name="Land M."/>
            <person name="Hauser L."/>
            <person name="Pelletier D.A."/>
            <person name="Kyrpides N."/>
            <person name="Kim E."/>
            <person name="Harwood C.S."/>
            <person name="Oda Y."/>
            <person name="Richardson P."/>
        </authorList>
    </citation>
    <scope>NUCLEOTIDE SEQUENCE [LARGE SCALE GENOMIC DNA]</scope>
    <source>
        <strain>BisA53</strain>
    </source>
</reference>
<dbReference type="EMBL" id="CP000463">
    <property type="protein sequence ID" value="ABJ06699.1"/>
    <property type="molecule type" value="Genomic_DNA"/>
</dbReference>
<dbReference type="SMR" id="Q07MY5"/>
<dbReference type="STRING" id="316055.RPE_2762"/>
<dbReference type="KEGG" id="rpe:RPE_2762"/>
<dbReference type="eggNOG" id="COG1923">
    <property type="taxonomic scope" value="Bacteria"/>
</dbReference>
<dbReference type="HOGENOM" id="CLU_113688_0_0_5"/>
<dbReference type="OrthoDB" id="9799751at2"/>
<dbReference type="GO" id="GO:0005829">
    <property type="term" value="C:cytosol"/>
    <property type="evidence" value="ECO:0007669"/>
    <property type="project" value="TreeGrafter"/>
</dbReference>
<dbReference type="GO" id="GO:0003723">
    <property type="term" value="F:RNA binding"/>
    <property type="evidence" value="ECO:0007669"/>
    <property type="project" value="UniProtKB-UniRule"/>
</dbReference>
<dbReference type="GO" id="GO:0006355">
    <property type="term" value="P:regulation of DNA-templated transcription"/>
    <property type="evidence" value="ECO:0007669"/>
    <property type="project" value="InterPro"/>
</dbReference>
<dbReference type="GO" id="GO:0043487">
    <property type="term" value="P:regulation of RNA stability"/>
    <property type="evidence" value="ECO:0007669"/>
    <property type="project" value="TreeGrafter"/>
</dbReference>
<dbReference type="GO" id="GO:0045974">
    <property type="term" value="P:regulation of translation, ncRNA-mediated"/>
    <property type="evidence" value="ECO:0007669"/>
    <property type="project" value="TreeGrafter"/>
</dbReference>
<dbReference type="CDD" id="cd01716">
    <property type="entry name" value="Hfq"/>
    <property type="match status" value="1"/>
</dbReference>
<dbReference type="FunFam" id="2.30.30.100:FF:000001">
    <property type="entry name" value="RNA-binding protein Hfq"/>
    <property type="match status" value="1"/>
</dbReference>
<dbReference type="Gene3D" id="2.30.30.100">
    <property type="match status" value="1"/>
</dbReference>
<dbReference type="HAMAP" id="MF_00436">
    <property type="entry name" value="Hfq"/>
    <property type="match status" value="1"/>
</dbReference>
<dbReference type="InterPro" id="IPR005001">
    <property type="entry name" value="Hfq"/>
</dbReference>
<dbReference type="InterPro" id="IPR010920">
    <property type="entry name" value="LSM_dom_sf"/>
</dbReference>
<dbReference type="InterPro" id="IPR047575">
    <property type="entry name" value="Sm"/>
</dbReference>
<dbReference type="NCBIfam" id="TIGR02383">
    <property type="entry name" value="Hfq"/>
    <property type="match status" value="1"/>
</dbReference>
<dbReference type="NCBIfam" id="NF001602">
    <property type="entry name" value="PRK00395.1"/>
    <property type="match status" value="1"/>
</dbReference>
<dbReference type="PANTHER" id="PTHR34772">
    <property type="entry name" value="RNA-BINDING PROTEIN HFQ"/>
    <property type="match status" value="1"/>
</dbReference>
<dbReference type="PANTHER" id="PTHR34772:SF1">
    <property type="entry name" value="RNA-BINDING PROTEIN HFQ"/>
    <property type="match status" value="1"/>
</dbReference>
<dbReference type="Pfam" id="PF17209">
    <property type="entry name" value="Hfq"/>
    <property type="match status" value="1"/>
</dbReference>
<dbReference type="SUPFAM" id="SSF50182">
    <property type="entry name" value="Sm-like ribonucleoproteins"/>
    <property type="match status" value="1"/>
</dbReference>
<dbReference type="PROSITE" id="PS52002">
    <property type="entry name" value="SM"/>
    <property type="match status" value="1"/>
</dbReference>
<evidence type="ECO:0000255" key="1">
    <source>
        <dbReference type="HAMAP-Rule" id="MF_00436"/>
    </source>
</evidence>
<evidence type="ECO:0000255" key="2">
    <source>
        <dbReference type="PROSITE-ProRule" id="PRU01346"/>
    </source>
</evidence>
<proteinExistence type="inferred from homology"/>
<feature type="chain" id="PRO_1000080679" description="RNA-binding protein Hfq">
    <location>
        <begin position="1"/>
        <end position="82"/>
    </location>
</feature>
<feature type="domain" description="Sm" evidence="2">
    <location>
        <begin position="11"/>
        <end position="71"/>
    </location>
</feature>
<protein>
    <recommendedName>
        <fullName evidence="1">RNA-binding protein Hfq</fullName>
    </recommendedName>
</protein>
<name>HFQ_RHOP5</name>
<keyword id="KW-0694">RNA-binding</keyword>
<keyword id="KW-0346">Stress response</keyword>
<accession>Q07MY5</accession>